<gene>
    <name type="primary">sepp1b</name>
</gene>
<comment type="function">
    <text evidence="1">Might be responsible for some of the extracellular antioxidant defense properties of selenium.</text>
</comment>
<comment type="subcellular location">
    <subcellularLocation>
        <location evidence="1">Secreted</location>
    </subcellularLocation>
</comment>
<feature type="signal peptide" evidence="2">
    <location>
        <begin position="1"/>
        <end position="18"/>
    </location>
</feature>
<feature type="chain" id="PRO_0000022301" description="Selenoprotein Pb">
    <location>
        <begin position="19"/>
        <end position="265"/>
    </location>
</feature>
<feature type="region of interest" description="Disordered" evidence="3">
    <location>
        <begin position="188"/>
        <end position="265"/>
    </location>
</feature>
<feature type="compositionally biased region" description="Polar residues" evidence="3">
    <location>
        <begin position="201"/>
        <end position="211"/>
    </location>
</feature>
<feature type="compositionally biased region" description="Basic residues" evidence="3">
    <location>
        <begin position="215"/>
        <end position="231"/>
    </location>
</feature>
<feature type="compositionally biased region" description="Basic and acidic residues" evidence="3">
    <location>
        <begin position="239"/>
        <end position="265"/>
    </location>
</feature>
<feature type="non-standard amino acid" description="Selenocysteine" evidence="4">
    <location>
        <position position="64"/>
    </location>
</feature>
<feature type="glycosylation site" description="N-linked (GlcNAc...) asparagine" evidence="2">
    <location>
        <position position="28"/>
    </location>
</feature>
<feature type="glycosylation site" description="N-linked (GlcNAc...) asparagine" evidence="2">
    <location>
        <position position="88"/>
    </location>
</feature>
<feature type="glycosylation site" description="N-linked (GlcNAc...) asparagine" evidence="2">
    <location>
        <position position="178"/>
    </location>
</feature>
<feature type="glycosylation site" description="N-linked (GlcNAc...) asparagine" evidence="2">
    <location>
        <position position="184"/>
    </location>
</feature>
<feature type="glycosylation site" description="N-linked (GlcNAc...) asparagine" evidence="2">
    <location>
        <position position="207"/>
    </location>
</feature>
<protein>
    <recommendedName>
        <fullName>Selenoprotein Pb</fullName>
        <shortName>zSelPb</shortName>
    </recommendedName>
</protein>
<dbReference type="EMBL" id="AF322072">
    <property type="protein sequence ID" value="AAG53689.1"/>
    <property type="molecule type" value="mRNA"/>
</dbReference>
<dbReference type="STRING" id="7955.ENSDARP00000100393"/>
<dbReference type="GlyCosmos" id="Q98SV0">
    <property type="glycosylation" value="5 sites, No reported glycans"/>
</dbReference>
<dbReference type="PaxDb" id="7955-ENSDARP00000100393"/>
<dbReference type="AGR" id="ZFIN:ZDB-GENE-030311-2"/>
<dbReference type="ZFIN" id="ZDB-GENE-030311-2">
    <property type="gene designation" value="selenop2"/>
</dbReference>
<dbReference type="eggNOG" id="ENOG502RY36">
    <property type="taxonomic scope" value="Eukaryota"/>
</dbReference>
<dbReference type="InParanoid" id="Q98SV0"/>
<dbReference type="PhylomeDB" id="Q98SV0"/>
<dbReference type="PRO" id="PR:Q98SV0"/>
<dbReference type="Proteomes" id="UP000000437">
    <property type="component" value="Unplaced"/>
</dbReference>
<dbReference type="GO" id="GO:0005576">
    <property type="term" value="C:extracellular region"/>
    <property type="evidence" value="ECO:0000318"/>
    <property type="project" value="GO_Central"/>
</dbReference>
<dbReference type="GO" id="GO:0008430">
    <property type="term" value="F:selenium binding"/>
    <property type="evidence" value="ECO:0000318"/>
    <property type="project" value="GO_Central"/>
</dbReference>
<dbReference type="GO" id="GO:0001887">
    <property type="term" value="P:selenium compound metabolic process"/>
    <property type="evidence" value="ECO:0000318"/>
    <property type="project" value="GO_Central"/>
</dbReference>
<dbReference type="InterPro" id="IPR007671">
    <property type="entry name" value="Selenoprotein-P_N"/>
</dbReference>
<dbReference type="InterPro" id="IPR037941">
    <property type="entry name" value="SeP"/>
</dbReference>
<dbReference type="InterPro" id="IPR036249">
    <property type="entry name" value="Thioredoxin-like_sf"/>
</dbReference>
<dbReference type="PANTHER" id="PTHR10105">
    <property type="entry name" value="SELENOPROTEIN P"/>
    <property type="match status" value="1"/>
</dbReference>
<dbReference type="PANTHER" id="PTHR10105:SF4">
    <property type="entry name" value="SELENOPROTEIN P2"/>
    <property type="match status" value="1"/>
</dbReference>
<dbReference type="Pfam" id="PF04592">
    <property type="entry name" value="SelP_N"/>
    <property type="match status" value="1"/>
</dbReference>
<dbReference type="SUPFAM" id="SSF52833">
    <property type="entry name" value="Thioredoxin-like"/>
    <property type="match status" value="1"/>
</dbReference>
<evidence type="ECO:0000250" key="1">
    <source>
        <dbReference type="UniProtKB" id="P49908"/>
    </source>
</evidence>
<evidence type="ECO:0000255" key="2"/>
<evidence type="ECO:0000256" key="3">
    <source>
        <dbReference type="SAM" id="MobiDB-lite"/>
    </source>
</evidence>
<evidence type="ECO:0000303" key="4">
    <source>
    </source>
</evidence>
<evidence type="ECO:0000312" key="5">
    <source>
        <dbReference type="EMBL" id="AAG53689.1"/>
    </source>
</evidence>
<name>SELPB_DANRE</name>
<sequence length="265" mass="30040">MQALWPLLLSALPALLGASSLFVEKESNGSRICKPAPQWEIDGKTPMKELLGNVVVVALLKASUHFCLTQAARLGDLRDKLANGGLTNISFMVVNEQDSQSRAMYWELKRRTAQDIPVYQQSPLQNDVWEILEGDKDDFLVYDRCGYLTFHIVLPFSFLHYPYIEAAIRATYHKNMCNCSLNANFSISESSDSTKNDPAGENNQRPNSTEPVTAAHHHHHQQHEPHHHHHNPYPNSHKKSGDSDVTGKPKEPPHHSHQEHVHNHR</sequence>
<proteinExistence type="evidence at transcript level"/>
<accession>Q98SV0</accession>
<organism evidence="5">
    <name type="scientific">Danio rerio</name>
    <name type="common">Zebrafish</name>
    <name type="synonym">Brachydanio rerio</name>
    <dbReference type="NCBI Taxonomy" id="7955"/>
    <lineage>
        <taxon>Eukaryota</taxon>
        <taxon>Metazoa</taxon>
        <taxon>Chordata</taxon>
        <taxon>Craniata</taxon>
        <taxon>Vertebrata</taxon>
        <taxon>Euteleostomi</taxon>
        <taxon>Actinopterygii</taxon>
        <taxon>Neopterygii</taxon>
        <taxon>Teleostei</taxon>
        <taxon>Ostariophysi</taxon>
        <taxon>Cypriniformes</taxon>
        <taxon>Danionidae</taxon>
        <taxon>Danioninae</taxon>
        <taxon>Danio</taxon>
    </lineage>
</organism>
<keyword id="KW-0325">Glycoprotein</keyword>
<keyword id="KW-1185">Reference proteome</keyword>
<keyword id="KW-0964">Secreted</keyword>
<keyword id="KW-0712">Selenocysteine</keyword>
<keyword id="KW-0732">Signal</keyword>
<reference evidence="5" key="1">
    <citation type="journal article" date="2000" name="Genes Cells">
        <title>Selenium metabolism in zebrafish: multiplicity of selenoprotein genes and expression of a protein containing 17 selenocysteine residues.</title>
        <authorList>
            <person name="Kryukov G.V."/>
            <person name="Gladyshev V.N."/>
        </authorList>
    </citation>
    <scope>NUCLEOTIDE SEQUENCE [MRNA]</scope>
</reference>